<sequence>MSMQDPIADMLTRIRNGQAANKAAVTMPSSKLKVAIANVLKEEGFIEDFKVEGDTKPELELTLKYFQGKAVVESIQRVSRPGLRIYKRKDELPKVMAGLGIAVVSTSKGVMTDRAARQAGLGGEIICYVA</sequence>
<organism>
    <name type="scientific">Escherichia coli (strain K12 / MC4100 / BW2952)</name>
    <dbReference type="NCBI Taxonomy" id="595496"/>
    <lineage>
        <taxon>Bacteria</taxon>
        <taxon>Pseudomonadati</taxon>
        <taxon>Pseudomonadota</taxon>
        <taxon>Gammaproteobacteria</taxon>
        <taxon>Enterobacterales</taxon>
        <taxon>Enterobacteriaceae</taxon>
        <taxon>Escherichia</taxon>
    </lineage>
</organism>
<dbReference type="EMBL" id="CP001396">
    <property type="protein sequence ID" value="ACR61801.1"/>
    <property type="molecule type" value="Genomic_DNA"/>
</dbReference>
<dbReference type="RefSeq" id="WP_000062611.1">
    <property type="nucleotide sequence ID" value="NC_012759.1"/>
</dbReference>
<dbReference type="SMR" id="C4ZUG1"/>
<dbReference type="GeneID" id="93778681"/>
<dbReference type="KEGG" id="ebw:BWG_2997"/>
<dbReference type="HOGENOM" id="CLU_098428_0_0_6"/>
<dbReference type="GO" id="GO:1990904">
    <property type="term" value="C:ribonucleoprotein complex"/>
    <property type="evidence" value="ECO:0007669"/>
    <property type="project" value="UniProtKB-KW"/>
</dbReference>
<dbReference type="GO" id="GO:0005840">
    <property type="term" value="C:ribosome"/>
    <property type="evidence" value="ECO:0007669"/>
    <property type="project" value="UniProtKB-KW"/>
</dbReference>
<dbReference type="GO" id="GO:0019843">
    <property type="term" value="F:rRNA binding"/>
    <property type="evidence" value="ECO:0007669"/>
    <property type="project" value="UniProtKB-UniRule"/>
</dbReference>
<dbReference type="GO" id="GO:0003735">
    <property type="term" value="F:structural constituent of ribosome"/>
    <property type="evidence" value="ECO:0007669"/>
    <property type="project" value="InterPro"/>
</dbReference>
<dbReference type="GO" id="GO:0006412">
    <property type="term" value="P:translation"/>
    <property type="evidence" value="ECO:0007669"/>
    <property type="project" value="UniProtKB-UniRule"/>
</dbReference>
<dbReference type="FunFam" id="3.30.1370.30:FF:000003">
    <property type="entry name" value="30S ribosomal protein S8"/>
    <property type="match status" value="1"/>
</dbReference>
<dbReference type="FunFam" id="3.30.1490.10:FF:000001">
    <property type="entry name" value="30S ribosomal protein S8"/>
    <property type="match status" value="1"/>
</dbReference>
<dbReference type="Gene3D" id="3.30.1370.30">
    <property type="match status" value="1"/>
</dbReference>
<dbReference type="Gene3D" id="3.30.1490.10">
    <property type="match status" value="1"/>
</dbReference>
<dbReference type="HAMAP" id="MF_01302_B">
    <property type="entry name" value="Ribosomal_uS8_B"/>
    <property type="match status" value="1"/>
</dbReference>
<dbReference type="InterPro" id="IPR000630">
    <property type="entry name" value="Ribosomal_uS8"/>
</dbReference>
<dbReference type="InterPro" id="IPR047863">
    <property type="entry name" value="Ribosomal_uS8_CS"/>
</dbReference>
<dbReference type="InterPro" id="IPR035987">
    <property type="entry name" value="Ribosomal_uS8_sf"/>
</dbReference>
<dbReference type="NCBIfam" id="NF001109">
    <property type="entry name" value="PRK00136.1"/>
    <property type="match status" value="1"/>
</dbReference>
<dbReference type="PANTHER" id="PTHR11758">
    <property type="entry name" value="40S RIBOSOMAL PROTEIN S15A"/>
    <property type="match status" value="1"/>
</dbReference>
<dbReference type="Pfam" id="PF00410">
    <property type="entry name" value="Ribosomal_S8"/>
    <property type="match status" value="1"/>
</dbReference>
<dbReference type="SUPFAM" id="SSF56047">
    <property type="entry name" value="Ribosomal protein S8"/>
    <property type="match status" value="1"/>
</dbReference>
<dbReference type="PROSITE" id="PS00053">
    <property type="entry name" value="RIBOSOMAL_S8"/>
    <property type="match status" value="1"/>
</dbReference>
<accession>C4ZUG1</accession>
<feature type="chain" id="PRO_1000214249" description="Small ribosomal subunit protein uS8">
    <location>
        <begin position="1"/>
        <end position="130"/>
    </location>
</feature>
<evidence type="ECO:0000255" key="1">
    <source>
        <dbReference type="HAMAP-Rule" id="MF_01302"/>
    </source>
</evidence>
<evidence type="ECO:0000305" key="2"/>
<proteinExistence type="inferred from homology"/>
<keyword id="KW-0687">Ribonucleoprotein</keyword>
<keyword id="KW-0689">Ribosomal protein</keyword>
<keyword id="KW-0694">RNA-binding</keyword>
<keyword id="KW-0699">rRNA-binding</keyword>
<reference key="1">
    <citation type="journal article" date="2009" name="J. Bacteriol.">
        <title>Genomic sequencing reveals regulatory mutations and recombinational events in the widely used MC4100 lineage of Escherichia coli K-12.</title>
        <authorList>
            <person name="Ferenci T."/>
            <person name="Zhou Z."/>
            <person name="Betteridge T."/>
            <person name="Ren Y."/>
            <person name="Liu Y."/>
            <person name="Feng L."/>
            <person name="Reeves P.R."/>
            <person name="Wang L."/>
        </authorList>
    </citation>
    <scope>NUCLEOTIDE SEQUENCE [LARGE SCALE GENOMIC DNA]</scope>
    <source>
        <strain>K12 / MC4100 / BW2952</strain>
    </source>
</reference>
<comment type="function">
    <text evidence="1">One of the primary rRNA binding proteins, it binds directly to 16S rRNA central domain where it helps coordinate assembly of the platform of the 30S subunit.</text>
</comment>
<comment type="subunit">
    <text evidence="1">Part of the 30S ribosomal subunit. Contacts proteins S5 and S12.</text>
</comment>
<comment type="similarity">
    <text evidence="1">Belongs to the universal ribosomal protein uS8 family.</text>
</comment>
<name>RS8_ECOBW</name>
<gene>
    <name evidence="1" type="primary">rpsH</name>
    <name type="ordered locus">BWG_2997</name>
</gene>
<protein>
    <recommendedName>
        <fullName evidence="1">Small ribosomal subunit protein uS8</fullName>
    </recommendedName>
    <alternativeName>
        <fullName evidence="2">30S ribosomal protein S8</fullName>
    </alternativeName>
</protein>